<reference key="1">
    <citation type="journal article" date="2009" name="Appl. Environ. Microbiol.">
        <title>Genome analysis of the meat starter culture bacterium Staphylococcus carnosus TM300.</title>
        <authorList>
            <person name="Rosenstein R."/>
            <person name="Nerz C."/>
            <person name="Biswas L."/>
            <person name="Resch A."/>
            <person name="Raddatz G."/>
            <person name="Schuster S.C."/>
            <person name="Goetz F."/>
        </authorList>
    </citation>
    <scope>NUCLEOTIDE SEQUENCE [LARGE SCALE GENOMIC DNA]</scope>
    <source>
        <strain>TM300</strain>
    </source>
</reference>
<evidence type="ECO:0000255" key="1">
    <source>
        <dbReference type="HAMAP-Rule" id="MF_01953"/>
    </source>
</evidence>
<keyword id="KW-0963">Cytoplasm</keyword>
<keyword id="KW-0378">Hydrolase</keyword>
<keyword id="KW-0479">Metal-binding</keyword>
<keyword id="KW-0533">Nickel</keyword>
<keyword id="KW-1185">Reference proteome</keyword>
<gene>
    <name evidence="1" type="primary">ureC</name>
    <name type="ordered locus">Sca_1782</name>
</gene>
<feature type="chain" id="PRO_1000188895" description="Urease subunit alpha">
    <location>
        <begin position="1"/>
        <end position="571"/>
    </location>
</feature>
<feature type="domain" description="Urease" evidence="1">
    <location>
        <begin position="133"/>
        <end position="571"/>
    </location>
</feature>
<feature type="active site" description="Proton donor" evidence="1">
    <location>
        <position position="324"/>
    </location>
</feature>
<feature type="binding site" evidence="1">
    <location>
        <position position="138"/>
    </location>
    <ligand>
        <name>Ni(2+)</name>
        <dbReference type="ChEBI" id="CHEBI:49786"/>
        <label>1</label>
    </ligand>
</feature>
<feature type="binding site" evidence="1">
    <location>
        <position position="140"/>
    </location>
    <ligand>
        <name>Ni(2+)</name>
        <dbReference type="ChEBI" id="CHEBI:49786"/>
        <label>1</label>
    </ligand>
</feature>
<feature type="binding site" description="via carbamate group" evidence="1">
    <location>
        <position position="221"/>
    </location>
    <ligand>
        <name>Ni(2+)</name>
        <dbReference type="ChEBI" id="CHEBI:49786"/>
        <label>1</label>
    </ligand>
</feature>
<feature type="binding site" description="via carbamate group" evidence="1">
    <location>
        <position position="221"/>
    </location>
    <ligand>
        <name>Ni(2+)</name>
        <dbReference type="ChEBI" id="CHEBI:49786"/>
        <label>2</label>
    </ligand>
</feature>
<feature type="binding site" evidence="1">
    <location>
        <position position="223"/>
    </location>
    <ligand>
        <name>substrate</name>
    </ligand>
</feature>
<feature type="binding site" evidence="1">
    <location>
        <position position="250"/>
    </location>
    <ligand>
        <name>Ni(2+)</name>
        <dbReference type="ChEBI" id="CHEBI:49786"/>
        <label>2</label>
    </ligand>
</feature>
<feature type="binding site" evidence="1">
    <location>
        <position position="276"/>
    </location>
    <ligand>
        <name>Ni(2+)</name>
        <dbReference type="ChEBI" id="CHEBI:49786"/>
        <label>2</label>
    </ligand>
</feature>
<feature type="binding site" evidence="1">
    <location>
        <position position="364"/>
    </location>
    <ligand>
        <name>Ni(2+)</name>
        <dbReference type="ChEBI" id="CHEBI:49786"/>
        <label>1</label>
    </ligand>
</feature>
<feature type="modified residue" description="N6-carboxylysine" evidence="1">
    <location>
        <position position="221"/>
    </location>
</feature>
<name>URE1_STACT</name>
<protein>
    <recommendedName>
        <fullName evidence="1">Urease subunit alpha</fullName>
        <ecNumber evidence="1">3.5.1.5</ecNumber>
    </recommendedName>
    <alternativeName>
        <fullName evidence="1">Urea amidohydrolase subunit alpha</fullName>
    </alternativeName>
</protein>
<sequence>MSFKMTQSQYTSLYGPTIGDAIRLGDTNLFATIEKDFANYGDEATFGGGKSVRDGMAQNPNVTRDDRYVADTVITNAVIIDYDKVYKADLGIKNGYIMKYGKAGNPDIMDDVDIIIGASTDIISGEGKIVTAGGIDTHVHFINPEQAYVALESGVTTHIGGGTGASEGAKATTVAPGPWHIHRMLEAAEGLPINVGFTGKGQAHNHTALIEQIHAGAIGLKVHEDWGATPSALSHALDVADDYDVQIALHADTLNEAGFMEDTMKAIKDRVIHMYHTEGAGGGHAPDLIKSASYPNVLPSSTNPTLPYTVNTIDEHLDMVMITHHLNASIPEDIAFADSRIRKETIAAEDVLQDMGVFSMVSSDSQAMDRVGEVITRTWQVAHRMKEQRGYLDGDKEYNDNNRIKRYIAKYTINPAITHGISEYVGSIEEGKLADLVIWDPAFFGVKPEMILKAGMINTAVNGDANGSIPTSEPLKYRKMYGQYGGNLTGTSITFVSNIAYMNDIERQLSLHRMVRPVKGIRQLTKKDMKNNSETPKLDVDPQTYEVFVDGKLITSEPAKELPLAQRYFLF</sequence>
<organism>
    <name type="scientific">Staphylococcus carnosus (strain TM300)</name>
    <dbReference type="NCBI Taxonomy" id="396513"/>
    <lineage>
        <taxon>Bacteria</taxon>
        <taxon>Bacillati</taxon>
        <taxon>Bacillota</taxon>
        <taxon>Bacilli</taxon>
        <taxon>Bacillales</taxon>
        <taxon>Staphylococcaceae</taxon>
        <taxon>Staphylococcus</taxon>
    </lineage>
</organism>
<accession>B9DLY0</accession>
<comment type="catalytic activity">
    <reaction evidence="1">
        <text>urea + 2 H2O + H(+) = hydrogencarbonate + 2 NH4(+)</text>
        <dbReference type="Rhea" id="RHEA:20557"/>
        <dbReference type="ChEBI" id="CHEBI:15377"/>
        <dbReference type="ChEBI" id="CHEBI:15378"/>
        <dbReference type="ChEBI" id="CHEBI:16199"/>
        <dbReference type="ChEBI" id="CHEBI:17544"/>
        <dbReference type="ChEBI" id="CHEBI:28938"/>
        <dbReference type="EC" id="3.5.1.5"/>
    </reaction>
</comment>
<comment type="cofactor">
    <cofactor evidence="1">
        <name>Ni cation</name>
        <dbReference type="ChEBI" id="CHEBI:25516"/>
    </cofactor>
    <text evidence="1">Binds 2 nickel ions per subunit.</text>
</comment>
<comment type="pathway">
    <text evidence="1">Nitrogen metabolism; urea degradation; CO(2) and NH(3) from urea (urease route): step 1/1.</text>
</comment>
<comment type="subunit">
    <text evidence="1">Heterotrimer of UreA (gamma), UreB (beta) and UreC (alpha) subunits. Three heterotrimers associate to form the active enzyme.</text>
</comment>
<comment type="subcellular location">
    <subcellularLocation>
        <location evidence="1">Cytoplasm</location>
    </subcellularLocation>
</comment>
<comment type="PTM">
    <text evidence="1">Carboxylation allows a single lysine to coordinate two nickel ions.</text>
</comment>
<comment type="similarity">
    <text evidence="1">Belongs to the metallo-dependent hydrolases superfamily. Urease alpha subunit family.</text>
</comment>
<proteinExistence type="inferred from homology"/>
<dbReference type="EC" id="3.5.1.5" evidence="1"/>
<dbReference type="EMBL" id="AM295250">
    <property type="protein sequence ID" value="CAL28687.1"/>
    <property type="molecule type" value="Genomic_DNA"/>
</dbReference>
<dbReference type="RefSeq" id="WP_015901023.1">
    <property type="nucleotide sequence ID" value="NC_012121.1"/>
</dbReference>
<dbReference type="SMR" id="B9DLY0"/>
<dbReference type="MEROPS" id="M38.982"/>
<dbReference type="GeneID" id="93794240"/>
<dbReference type="KEGG" id="sca:SCA_1782"/>
<dbReference type="eggNOG" id="COG0804">
    <property type="taxonomic scope" value="Bacteria"/>
</dbReference>
<dbReference type="HOGENOM" id="CLU_000980_0_0_9"/>
<dbReference type="OrthoDB" id="9802793at2"/>
<dbReference type="BioCyc" id="SCAR396513:SCA_RS09065-MONOMER"/>
<dbReference type="UniPathway" id="UPA00258">
    <property type="reaction ID" value="UER00370"/>
</dbReference>
<dbReference type="Proteomes" id="UP000000444">
    <property type="component" value="Chromosome"/>
</dbReference>
<dbReference type="GO" id="GO:0005737">
    <property type="term" value="C:cytoplasm"/>
    <property type="evidence" value="ECO:0007669"/>
    <property type="project" value="UniProtKB-SubCell"/>
</dbReference>
<dbReference type="GO" id="GO:0016151">
    <property type="term" value="F:nickel cation binding"/>
    <property type="evidence" value="ECO:0007669"/>
    <property type="project" value="UniProtKB-UniRule"/>
</dbReference>
<dbReference type="GO" id="GO:0009039">
    <property type="term" value="F:urease activity"/>
    <property type="evidence" value="ECO:0007669"/>
    <property type="project" value="UniProtKB-UniRule"/>
</dbReference>
<dbReference type="GO" id="GO:0043419">
    <property type="term" value="P:urea catabolic process"/>
    <property type="evidence" value="ECO:0007669"/>
    <property type="project" value="UniProtKB-UniRule"/>
</dbReference>
<dbReference type="CDD" id="cd00375">
    <property type="entry name" value="Urease_alpha"/>
    <property type="match status" value="1"/>
</dbReference>
<dbReference type="Gene3D" id="3.20.20.140">
    <property type="entry name" value="Metal-dependent hydrolases"/>
    <property type="match status" value="1"/>
</dbReference>
<dbReference type="Gene3D" id="2.30.40.10">
    <property type="entry name" value="Urease, subunit C, domain 1"/>
    <property type="match status" value="1"/>
</dbReference>
<dbReference type="HAMAP" id="MF_01953">
    <property type="entry name" value="Urease_alpha"/>
    <property type="match status" value="1"/>
</dbReference>
<dbReference type="InterPro" id="IPR006680">
    <property type="entry name" value="Amidohydro-rel"/>
</dbReference>
<dbReference type="InterPro" id="IPR011059">
    <property type="entry name" value="Metal-dep_hydrolase_composite"/>
</dbReference>
<dbReference type="InterPro" id="IPR032466">
    <property type="entry name" value="Metal_Hydrolase"/>
</dbReference>
<dbReference type="InterPro" id="IPR011612">
    <property type="entry name" value="Urease_alpha_N_dom"/>
</dbReference>
<dbReference type="InterPro" id="IPR050112">
    <property type="entry name" value="Urease_alpha_subunit"/>
</dbReference>
<dbReference type="InterPro" id="IPR017950">
    <property type="entry name" value="Urease_AS"/>
</dbReference>
<dbReference type="InterPro" id="IPR005848">
    <property type="entry name" value="Urease_asu"/>
</dbReference>
<dbReference type="InterPro" id="IPR017951">
    <property type="entry name" value="Urease_asu_c"/>
</dbReference>
<dbReference type="InterPro" id="IPR029754">
    <property type="entry name" value="Urease_Ni-bd"/>
</dbReference>
<dbReference type="NCBIfam" id="NF009686">
    <property type="entry name" value="PRK13207.1"/>
    <property type="match status" value="1"/>
</dbReference>
<dbReference type="NCBIfam" id="TIGR01792">
    <property type="entry name" value="urease_alph"/>
    <property type="match status" value="1"/>
</dbReference>
<dbReference type="PANTHER" id="PTHR43440">
    <property type="entry name" value="UREASE"/>
    <property type="match status" value="1"/>
</dbReference>
<dbReference type="PANTHER" id="PTHR43440:SF1">
    <property type="entry name" value="UREASE"/>
    <property type="match status" value="1"/>
</dbReference>
<dbReference type="Pfam" id="PF01979">
    <property type="entry name" value="Amidohydro_1"/>
    <property type="match status" value="1"/>
</dbReference>
<dbReference type="Pfam" id="PF00449">
    <property type="entry name" value="Urease_alpha"/>
    <property type="match status" value="1"/>
</dbReference>
<dbReference type="PRINTS" id="PR01752">
    <property type="entry name" value="UREASE"/>
</dbReference>
<dbReference type="SUPFAM" id="SSF51338">
    <property type="entry name" value="Composite domain of metallo-dependent hydrolases"/>
    <property type="match status" value="1"/>
</dbReference>
<dbReference type="SUPFAM" id="SSF51556">
    <property type="entry name" value="Metallo-dependent hydrolases"/>
    <property type="match status" value="1"/>
</dbReference>
<dbReference type="PROSITE" id="PS01120">
    <property type="entry name" value="UREASE_1"/>
    <property type="match status" value="1"/>
</dbReference>
<dbReference type="PROSITE" id="PS00145">
    <property type="entry name" value="UREASE_2"/>
    <property type="match status" value="1"/>
</dbReference>
<dbReference type="PROSITE" id="PS51368">
    <property type="entry name" value="UREASE_3"/>
    <property type="match status" value="1"/>
</dbReference>